<gene>
    <name type="primary">pyrD</name>
    <name type="ordered locus">GM21_1820</name>
</gene>
<proteinExistence type="inferred from homology"/>
<keyword id="KW-0963">Cytoplasm</keyword>
<keyword id="KW-0285">Flavoprotein</keyword>
<keyword id="KW-0288">FMN</keyword>
<keyword id="KW-0520">NAD</keyword>
<keyword id="KW-0560">Oxidoreductase</keyword>
<keyword id="KW-0665">Pyrimidine biosynthesis</keyword>
<comment type="function">
    <text evidence="1">Catalyzes the conversion of dihydroorotate to orotate with NAD(+) as electron acceptor.</text>
</comment>
<comment type="catalytic activity">
    <reaction>
        <text>(S)-dihydroorotate + NAD(+) = orotate + NADH + H(+)</text>
        <dbReference type="Rhea" id="RHEA:13513"/>
        <dbReference type="ChEBI" id="CHEBI:15378"/>
        <dbReference type="ChEBI" id="CHEBI:30839"/>
        <dbReference type="ChEBI" id="CHEBI:30864"/>
        <dbReference type="ChEBI" id="CHEBI:57540"/>
        <dbReference type="ChEBI" id="CHEBI:57945"/>
        <dbReference type="EC" id="1.3.1.14"/>
    </reaction>
</comment>
<comment type="cofactor">
    <cofactor evidence="1">
        <name>FMN</name>
        <dbReference type="ChEBI" id="CHEBI:58210"/>
    </cofactor>
    <text evidence="1">Binds 1 FMN per subunit.</text>
</comment>
<comment type="pathway">
    <text>Pyrimidine metabolism; UMP biosynthesis via de novo pathway; orotate from (S)-dihydroorotate (NAD(+) route): step 1/1.</text>
</comment>
<comment type="subunit">
    <text evidence="1">Heterotetramer of 2 PyrK and 2 PyrD type B subunits.</text>
</comment>
<comment type="subcellular location">
    <subcellularLocation>
        <location evidence="1">Cytoplasm</location>
    </subcellularLocation>
</comment>
<comment type="similarity">
    <text evidence="2">Belongs to the dihydroorotate dehydrogenase family. Type 1 subfamily.</text>
</comment>
<name>PYRDB_GEOSM</name>
<reference key="1">
    <citation type="submission" date="2009-07" db="EMBL/GenBank/DDBJ databases">
        <title>Complete sequence of Geobacter sp. M21.</title>
        <authorList>
            <consortium name="US DOE Joint Genome Institute"/>
            <person name="Lucas S."/>
            <person name="Copeland A."/>
            <person name="Lapidus A."/>
            <person name="Glavina del Rio T."/>
            <person name="Dalin E."/>
            <person name="Tice H."/>
            <person name="Bruce D."/>
            <person name="Goodwin L."/>
            <person name="Pitluck S."/>
            <person name="Saunders E."/>
            <person name="Brettin T."/>
            <person name="Detter J.C."/>
            <person name="Han C."/>
            <person name="Larimer F."/>
            <person name="Land M."/>
            <person name="Hauser L."/>
            <person name="Kyrpides N."/>
            <person name="Ovchinnikova G."/>
            <person name="Lovley D."/>
        </authorList>
    </citation>
    <scope>NUCLEOTIDE SEQUENCE [LARGE SCALE GENOMIC DNA]</scope>
    <source>
        <strain>M21</strain>
    </source>
</reference>
<protein>
    <recommendedName>
        <fullName>Dihydroorotate dehydrogenase B (NAD(+)), catalytic subunit</fullName>
        <shortName>DHOD B</shortName>
        <shortName>DHODase B</shortName>
        <shortName>DHOdehase B</shortName>
        <ecNumber>1.3.1.14</ecNumber>
    </recommendedName>
    <alternativeName>
        <fullName>Dihydroorotate oxidase B</fullName>
    </alternativeName>
    <alternativeName>
        <fullName>Orotate reductase (NADH)</fullName>
    </alternativeName>
</protein>
<accession>C6E6N2</accession>
<sequence>MQRPDMSVAVAGIKMRNPVMTASGTFGYGAEFADYLDLESIGAMISKGLSLKPKAGNPTPRIVETPGGMLNAIGLQNVGIDAFIEQKLPYLKNVNTPVIVNLYGNTLEEYGEVAARLDGLAGVAGIEVNISCPNVKQGGIVFGTDPGAAQEVVRLVKKNTSKPMIVKLSPNVTDVVVMAKACADAGADALSLINTLTGMAIDLERRRPVLANVTGGLSGPAIKPVALRMVWQVGKAVKLPLIGIGGIMNGRDALEFMLAGATAVQVGTASFLDPSAAQRIAREMEQYLADHNIESVSSLIGALEL</sequence>
<dbReference type="EC" id="1.3.1.14"/>
<dbReference type="EMBL" id="CP001661">
    <property type="protein sequence ID" value="ACT17873.1"/>
    <property type="molecule type" value="Genomic_DNA"/>
</dbReference>
<dbReference type="SMR" id="C6E6N2"/>
<dbReference type="STRING" id="443144.GM21_1820"/>
<dbReference type="KEGG" id="gem:GM21_1820"/>
<dbReference type="eggNOG" id="COG0167">
    <property type="taxonomic scope" value="Bacteria"/>
</dbReference>
<dbReference type="HOGENOM" id="CLU_042042_0_0_7"/>
<dbReference type="OrthoDB" id="9802377at2"/>
<dbReference type="UniPathway" id="UPA00070">
    <property type="reaction ID" value="UER00945"/>
</dbReference>
<dbReference type="GO" id="GO:0005737">
    <property type="term" value="C:cytoplasm"/>
    <property type="evidence" value="ECO:0007669"/>
    <property type="project" value="UniProtKB-SubCell"/>
</dbReference>
<dbReference type="GO" id="GO:0004589">
    <property type="term" value="F:dihydroorotate dehydrogenase (NAD+) activity"/>
    <property type="evidence" value="ECO:0007669"/>
    <property type="project" value="UniProtKB-EC"/>
</dbReference>
<dbReference type="GO" id="GO:0006207">
    <property type="term" value="P:'de novo' pyrimidine nucleobase biosynthetic process"/>
    <property type="evidence" value="ECO:0007669"/>
    <property type="project" value="InterPro"/>
</dbReference>
<dbReference type="GO" id="GO:0044205">
    <property type="term" value="P:'de novo' UMP biosynthetic process"/>
    <property type="evidence" value="ECO:0007669"/>
    <property type="project" value="UniProtKB-UniRule"/>
</dbReference>
<dbReference type="CDD" id="cd04740">
    <property type="entry name" value="DHOD_1B_like"/>
    <property type="match status" value="1"/>
</dbReference>
<dbReference type="FunFam" id="3.20.20.70:FF:000027">
    <property type="entry name" value="Dihydropyrimidine dehydrogenase [NADP(+)]"/>
    <property type="match status" value="1"/>
</dbReference>
<dbReference type="Gene3D" id="3.20.20.70">
    <property type="entry name" value="Aldolase class I"/>
    <property type="match status" value="1"/>
</dbReference>
<dbReference type="HAMAP" id="MF_00224">
    <property type="entry name" value="DHO_dh_type1"/>
    <property type="match status" value="1"/>
</dbReference>
<dbReference type="InterPro" id="IPR013785">
    <property type="entry name" value="Aldolase_TIM"/>
</dbReference>
<dbReference type="InterPro" id="IPR050074">
    <property type="entry name" value="DHO_dehydrogenase"/>
</dbReference>
<dbReference type="InterPro" id="IPR033888">
    <property type="entry name" value="DHOD_1B"/>
</dbReference>
<dbReference type="InterPro" id="IPR024920">
    <property type="entry name" value="Dihydroorotate_DH_1"/>
</dbReference>
<dbReference type="InterPro" id="IPR012135">
    <property type="entry name" value="Dihydroorotate_DH_1_2"/>
</dbReference>
<dbReference type="InterPro" id="IPR005720">
    <property type="entry name" value="Dihydroorotate_DH_cat"/>
</dbReference>
<dbReference type="InterPro" id="IPR001295">
    <property type="entry name" value="Dihydroorotate_DH_CS"/>
</dbReference>
<dbReference type="InterPro" id="IPR049622">
    <property type="entry name" value="Dihydroorotate_DH_I"/>
</dbReference>
<dbReference type="NCBIfam" id="NF005574">
    <property type="entry name" value="PRK07259.1"/>
    <property type="match status" value="1"/>
</dbReference>
<dbReference type="NCBIfam" id="TIGR01037">
    <property type="entry name" value="pyrD_sub1_fam"/>
    <property type="match status" value="1"/>
</dbReference>
<dbReference type="PANTHER" id="PTHR48109:SF1">
    <property type="entry name" value="DIHYDROOROTATE DEHYDROGENASE (FUMARATE)"/>
    <property type="match status" value="1"/>
</dbReference>
<dbReference type="PANTHER" id="PTHR48109">
    <property type="entry name" value="DIHYDROOROTATE DEHYDROGENASE (QUINONE), MITOCHONDRIAL-RELATED"/>
    <property type="match status" value="1"/>
</dbReference>
<dbReference type="Pfam" id="PF01180">
    <property type="entry name" value="DHO_dh"/>
    <property type="match status" value="1"/>
</dbReference>
<dbReference type="PIRSF" id="PIRSF000164">
    <property type="entry name" value="DHO_oxidase"/>
    <property type="match status" value="1"/>
</dbReference>
<dbReference type="SUPFAM" id="SSF51395">
    <property type="entry name" value="FMN-linked oxidoreductases"/>
    <property type="match status" value="1"/>
</dbReference>
<dbReference type="PROSITE" id="PS00911">
    <property type="entry name" value="DHODEHASE_1"/>
    <property type="match status" value="1"/>
</dbReference>
<dbReference type="PROSITE" id="PS00912">
    <property type="entry name" value="DHODEHASE_2"/>
    <property type="match status" value="1"/>
</dbReference>
<evidence type="ECO:0000250" key="1"/>
<evidence type="ECO:0000305" key="2"/>
<feature type="chain" id="PRO_1000204306" description="Dihydroorotate dehydrogenase B (NAD(+)), catalytic subunit">
    <location>
        <begin position="1"/>
        <end position="305"/>
    </location>
</feature>
<feature type="active site" description="Nucleophile">
    <location>
        <position position="132"/>
    </location>
</feature>
<feature type="binding site" evidence="1">
    <location>
        <position position="23"/>
    </location>
    <ligand>
        <name>FMN</name>
        <dbReference type="ChEBI" id="CHEBI:58210"/>
    </ligand>
</feature>
<feature type="binding site" evidence="1">
    <location>
        <begin position="47"/>
        <end position="48"/>
    </location>
    <ligand>
        <name>FMN</name>
        <dbReference type="ChEBI" id="CHEBI:58210"/>
    </ligand>
</feature>
<feature type="binding site" evidence="1">
    <location>
        <position position="47"/>
    </location>
    <ligand>
        <name>substrate</name>
    </ligand>
</feature>
<feature type="binding site" evidence="1">
    <location>
        <begin position="71"/>
        <end position="75"/>
    </location>
    <ligand>
        <name>substrate</name>
    </ligand>
</feature>
<feature type="binding site" evidence="1">
    <location>
        <position position="101"/>
    </location>
    <ligand>
        <name>FMN</name>
        <dbReference type="ChEBI" id="CHEBI:58210"/>
    </ligand>
</feature>
<feature type="binding site" evidence="1">
    <location>
        <position position="129"/>
    </location>
    <ligand>
        <name>FMN</name>
        <dbReference type="ChEBI" id="CHEBI:58210"/>
    </ligand>
</feature>
<feature type="binding site" evidence="1">
    <location>
        <position position="129"/>
    </location>
    <ligand>
        <name>substrate</name>
    </ligand>
</feature>
<feature type="binding site" evidence="1">
    <location>
        <position position="167"/>
    </location>
    <ligand>
        <name>FMN</name>
        <dbReference type="ChEBI" id="CHEBI:58210"/>
    </ligand>
</feature>
<feature type="binding site" evidence="1">
    <location>
        <position position="193"/>
    </location>
    <ligand>
        <name>FMN</name>
        <dbReference type="ChEBI" id="CHEBI:58210"/>
    </ligand>
</feature>
<feature type="binding site" evidence="1">
    <location>
        <begin position="194"/>
        <end position="195"/>
    </location>
    <ligand>
        <name>substrate</name>
    </ligand>
</feature>
<feature type="binding site" evidence="1">
    <location>
        <position position="219"/>
    </location>
    <ligand>
        <name>FMN</name>
        <dbReference type="ChEBI" id="CHEBI:58210"/>
    </ligand>
</feature>
<feature type="binding site" evidence="1">
    <location>
        <begin position="245"/>
        <end position="246"/>
    </location>
    <ligand>
        <name>FMN</name>
        <dbReference type="ChEBI" id="CHEBI:58210"/>
    </ligand>
</feature>
<feature type="binding site" evidence="1">
    <location>
        <begin position="267"/>
        <end position="268"/>
    </location>
    <ligand>
        <name>FMN</name>
        <dbReference type="ChEBI" id="CHEBI:58210"/>
    </ligand>
</feature>
<organism>
    <name type="scientific">Geobacter sp. (strain M21)</name>
    <dbReference type="NCBI Taxonomy" id="443144"/>
    <lineage>
        <taxon>Bacteria</taxon>
        <taxon>Pseudomonadati</taxon>
        <taxon>Thermodesulfobacteriota</taxon>
        <taxon>Desulfuromonadia</taxon>
        <taxon>Geobacterales</taxon>
        <taxon>Geobacteraceae</taxon>
        <taxon>Geobacter</taxon>
    </lineage>
</organism>